<gene>
    <name evidence="1" type="primary">dapB</name>
    <name type="ordered locus">STH1544</name>
</gene>
<reference key="1">
    <citation type="journal article" date="2004" name="Nucleic Acids Res.">
        <title>Genome sequence of Symbiobacterium thermophilum, an uncultivable bacterium that depends on microbial commensalism.</title>
        <authorList>
            <person name="Ueda K."/>
            <person name="Yamashita A."/>
            <person name="Ishikawa J."/>
            <person name="Shimada M."/>
            <person name="Watsuji T."/>
            <person name="Morimura K."/>
            <person name="Ikeda H."/>
            <person name="Hattori M."/>
            <person name="Beppu T."/>
        </authorList>
    </citation>
    <scope>NUCLEOTIDE SEQUENCE [LARGE SCALE GENOMIC DNA]</scope>
    <source>
        <strain>DSM 24528 / JCM 14929 / IAM 14863 / T</strain>
    </source>
</reference>
<comment type="function">
    <text evidence="1">Catalyzes the conversion of 4-hydroxy-tetrahydrodipicolinate (HTPA) to tetrahydrodipicolinate.</text>
</comment>
<comment type="catalytic activity">
    <reaction evidence="1">
        <text>(S)-2,3,4,5-tetrahydrodipicolinate + NAD(+) + H2O = (2S,4S)-4-hydroxy-2,3,4,5-tetrahydrodipicolinate + NADH + H(+)</text>
        <dbReference type="Rhea" id="RHEA:35323"/>
        <dbReference type="ChEBI" id="CHEBI:15377"/>
        <dbReference type="ChEBI" id="CHEBI:15378"/>
        <dbReference type="ChEBI" id="CHEBI:16845"/>
        <dbReference type="ChEBI" id="CHEBI:57540"/>
        <dbReference type="ChEBI" id="CHEBI:57945"/>
        <dbReference type="ChEBI" id="CHEBI:67139"/>
        <dbReference type="EC" id="1.17.1.8"/>
    </reaction>
</comment>
<comment type="catalytic activity">
    <reaction evidence="1">
        <text>(S)-2,3,4,5-tetrahydrodipicolinate + NADP(+) + H2O = (2S,4S)-4-hydroxy-2,3,4,5-tetrahydrodipicolinate + NADPH + H(+)</text>
        <dbReference type="Rhea" id="RHEA:35331"/>
        <dbReference type="ChEBI" id="CHEBI:15377"/>
        <dbReference type="ChEBI" id="CHEBI:15378"/>
        <dbReference type="ChEBI" id="CHEBI:16845"/>
        <dbReference type="ChEBI" id="CHEBI:57783"/>
        <dbReference type="ChEBI" id="CHEBI:58349"/>
        <dbReference type="ChEBI" id="CHEBI:67139"/>
        <dbReference type="EC" id="1.17.1.8"/>
    </reaction>
</comment>
<comment type="pathway">
    <text evidence="1">Amino-acid biosynthesis; L-lysine biosynthesis via DAP pathway; (S)-tetrahydrodipicolinate from L-aspartate: step 4/4.</text>
</comment>
<comment type="subcellular location">
    <subcellularLocation>
        <location evidence="1">Cytoplasm</location>
    </subcellularLocation>
</comment>
<comment type="similarity">
    <text evidence="1">Belongs to the DapB family.</text>
</comment>
<comment type="caution">
    <text evidence="2">Was originally thought to be a dihydrodipicolinate reductase (DHDPR), catalyzing the conversion of dihydrodipicolinate to tetrahydrodipicolinate. However, it was shown in E.coli that the substrate of the enzymatic reaction is not dihydrodipicolinate (DHDP) but in fact (2S,4S)-4-hydroxy-2,3,4,5-tetrahydrodipicolinic acid (HTPA), the product released by the DapA-catalyzed reaction.</text>
</comment>
<accession>Q67P64</accession>
<dbReference type="EC" id="1.17.1.8" evidence="1"/>
<dbReference type="EMBL" id="AP006840">
    <property type="protein sequence ID" value="BAD40529.1"/>
    <property type="molecule type" value="Genomic_DNA"/>
</dbReference>
<dbReference type="RefSeq" id="WP_011195674.1">
    <property type="nucleotide sequence ID" value="NC_006177.1"/>
</dbReference>
<dbReference type="SMR" id="Q67P64"/>
<dbReference type="STRING" id="292459.STH1544"/>
<dbReference type="KEGG" id="sth:STH1544"/>
<dbReference type="eggNOG" id="COG0289">
    <property type="taxonomic scope" value="Bacteria"/>
</dbReference>
<dbReference type="HOGENOM" id="CLU_047479_0_1_9"/>
<dbReference type="OrthoDB" id="9790352at2"/>
<dbReference type="UniPathway" id="UPA00034">
    <property type="reaction ID" value="UER00018"/>
</dbReference>
<dbReference type="Proteomes" id="UP000000417">
    <property type="component" value="Chromosome"/>
</dbReference>
<dbReference type="GO" id="GO:0005829">
    <property type="term" value="C:cytosol"/>
    <property type="evidence" value="ECO:0007669"/>
    <property type="project" value="TreeGrafter"/>
</dbReference>
<dbReference type="GO" id="GO:0008839">
    <property type="term" value="F:4-hydroxy-tetrahydrodipicolinate reductase"/>
    <property type="evidence" value="ECO:0007669"/>
    <property type="project" value="UniProtKB-EC"/>
</dbReference>
<dbReference type="GO" id="GO:0051287">
    <property type="term" value="F:NAD binding"/>
    <property type="evidence" value="ECO:0007669"/>
    <property type="project" value="UniProtKB-UniRule"/>
</dbReference>
<dbReference type="GO" id="GO:0050661">
    <property type="term" value="F:NADP binding"/>
    <property type="evidence" value="ECO:0007669"/>
    <property type="project" value="UniProtKB-UniRule"/>
</dbReference>
<dbReference type="GO" id="GO:0016726">
    <property type="term" value="F:oxidoreductase activity, acting on CH or CH2 groups, NAD or NADP as acceptor"/>
    <property type="evidence" value="ECO:0007669"/>
    <property type="project" value="UniProtKB-UniRule"/>
</dbReference>
<dbReference type="GO" id="GO:0019877">
    <property type="term" value="P:diaminopimelate biosynthetic process"/>
    <property type="evidence" value="ECO:0007669"/>
    <property type="project" value="UniProtKB-UniRule"/>
</dbReference>
<dbReference type="GO" id="GO:0009089">
    <property type="term" value="P:lysine biosynthetic process via diaminopimelate"/>
    <property type="evidence" value="ECO:0007669"/>
    <property type="project" value="UniProtKB-UniRule"/>
</dbReference>
<dbReference type="CDD" id="cd02274">
    <property type="entry name" value="DHDPR_N"/>
    <property type="match status" value="1"/>
</dbReference>
<dbReference type="FunFam" id="3.30.360.10:FF:000009">
    <property type="entry name" value="4-hydroxy-tetrahydrodipicolinate reductase"/>
    <property type="match status" value="1"/>
</dbReference>
<dbReference type="Gene3D" id="3.30.360.10">
    <property type="entry name" value="Dihydrodipicolinate Reductase, domain 2"/>
    <property type="match status" value="1"/>
</dbReference>
<dbReference type="Gene3D" id="3.40.50.720">
    <property type="entry name" value="NAD(P)-binding Rossmann-like Domain"/>
    <property type="match status" value="1"/>
</dbReference>
<dbReference type="HAMAP" id="MF_00102">
    <property type="entry name" value="DapB"/>
    <property type="match status" value="1"/>
</dbReference>
<dbReference type="InterPro" id="IPR022663">
    <property type="entry name" value="DapB_C"/>
</dbReference>
<dbReference type="InterPro" id="IPR000846">
    <property type="entry name" value="DapB_N"/>
</dbReference>
<dbReference type="InterPro" id="IPR022664">
    <property type="entry name" value="DapB_N_CS"/>
</dbReference>
<dbReference type="InterPro" id="IPR023940">
    <property type="entry name" value="DHDPR_bac"/>
</dbReference>
<dbReference type="InterPro" id="IPR036291">
    <property type="entry name" value="NAD(P)-bd_dom_sf"/>
</dbReference>
<dbReference type="NCBIfam" id="TIGR00036">
    <property type="entry name" value="dapB"/>
    <property type="match status" value="1"/>
</dbReference>
<dbReference type="PANTHER" id="PTHR20836:SF0">
    <property type="entry name" value="4-HYDROXY-TETRAHYDRODIPICOLINATE REDUCTASE 1, CHLOROPLASTIC-RELATED"/>
    <property type="match status" value="1"/>
</dbReference>
<dbReference type="PANTHER" id="PTHR20836">
    <property type="entry name" value="DIHYDRODIPICOLINATE REDUCTASE"/>
    <property type="match status" value="1"/>
</dbReference>
<dbReference type="Pfam" id="PF05173">
    <property type="entry name" value="DapB_C"/>
    <property type="match status" value="1"/>
</dbReference>
<dbReference type="Pfam" id="PF01113">
    <property type="entry name" value="DapB_N"/>
    <property type="match status" value="1"/>
</dbReference>
<dbReference type="PIRSF" id="PIRSF000161">
    <property type="entry name" value="DHPR"/>
    <property type="match status" value="1"/>
</dbReference>
<dbReference type="SUPFAM" id="SSF55347">
    <property type="entry name" value="Glyceraldehyde-3-phosphate dehydrogenase-like, C-terminal domain"/>
    <property type="match status" value="1"/>
</dbReference>
<dbReference type="SUPFAM" id="SSF51735">
    <property type="entry name" value="NAD(P)-binding Rossmann-fold domains"/>
    <property type="match status" value="1"/>
</dbReference>
<dbReference type="PROSITE" id="PS01298">
    <property type="entry name" value="DAPB"/>
    <property type="match status" value="1"/>
</dbReference>
<feature type="chain" id="PRO_0000228395" description="4-hydroxy-tetrahydrodipicolinate reductase">
    <location>
        <begin position="1"/>
        <end position="254"/>
    </location>
</feature>
<feature type="active site" description="Proton donor/acceptor" evidence="1">
    <location>
        <position position="157"/>
    </location>
</feature>
<feature type="active site" description="Proton donor" evidence="1">
    <location>
        <position position="161"/>
    </location>
</feature>
<feature type="binding site" evidence="1">
    <location>
        <begin position="10"/>
        <end position="15"/>
    </location>
    <ligand>
        <name>NAD(+)</name>
        <dbReference type="ChEBI" id="CHEBI:57540"/>
    </ligand>
</feature>
<feature type="binding site" evidence="1">
    <location>
        <begin position="101"/>
        <end position="103"/>
    </location>
    <ligand>
        <name>NAD(+)</name>
        <dbReference type="ChEBI" id="CHEBI:57540"/>
    </ligand>
</feature>
<feature type="binding site" evidence="1">
    <location>
        <position position="158"/>
    </location>
    <ligand>
        <name>(S)-2,3,4,5-tetrahydrodipicolinate</name>
        <dbReference type="ChEBI" id="CHEBI:16845"/>
    </ligand>
</feature>
<feature type="binding site" evidence="1">
    <location>
        <begin position="167"/>
        <end position="168"/>
    </location>
    <ligand>
        <name>(S)-2,3,4,5-tetrahydrodipicolinate</name>
        <dbReference type="ChEBI" id="CHEBI:16845"/>
    </ligand>
</feature>
<evidence type="ECO:0000255" key="1">
    <source>
        <dbReference type="HAMAP-Rule" id="MF_00102"/>
    </source>
</evidence>
<evidence type="ECO:0000305" key="2"/>
<organism>
    <name type="scientific">Symbiobacterium thermophilum (strain DSM 24528 / JCM 14929 / IAM 14863 / T)</name>
    <dbReference type="NCBI Taxonomy" id="292459"/>
    <lineage>
        <taxon>Bacteria</taxon>
        <taxon>Bacillati</taxon>
        <taxon>Bacillota</taxon>
        <taxon>Clostridia</taxon>
        <taxon>Eubacteriales</taxon>
        <taxon>Symbiobacteriaceae</taxon>
        <taxon>Symbiobacterium</taxon>
    </lineage>
</organism>
<protein>
    <recommendedName>
        <fullName evidence="1">4-hydroxy-tetrahydrodipicolinate reductase</fullName>
        <shortName evidence="1">HTPA reductase</shortName>
        <ecNumber evidence="1">1.17.1.8</ecNumber>
    </recommendedName>
</protein>
<proteinExistence type="inferred from homology"/>
<name>DAPB_SYMTH</name>
<sequence>MQPIRVVLAGATGKVGQVLARALVQEPGFALTGAIARQGGGRNLAELVPLGGRPGPTVHGSLEEFLAAGGEADVLVDFSVAEAGRRTIPAAIEASIAPVVGTTGFQPGETETWAAMCRKRGLGGAFIANYAVGIMLLMRFAEEAHRFFPDVEIIEMHHKTKLDAPSGTALRTKARLERGRGDLAAAEVPVHSVRLPGLVAHQEVIFGGLGQTLTIRHDAPSREAYVPGVLMTCRWVLREKRVAFDLEEVAFPRT</sequence>
<keyword id="KW-0028">Amino-acid biosynthesis</keyword>
<keyword id="KW-0963">Cytoplasm</keyword>
<keyword id="KW-0220">Diaminopimelate biosynthesis</keyword>
<keyword id="KW-0457">Lysine biosynthesis</keyword>
<keyword id="KW-0520">NAD</keyword>
<keyword id="KW-0521">NADP</keyword>
<keyword id="KW-0560">Oxidoreductase</keyword>
<keyword id="KW-1185">Reference proteome</keyword>